<accession>Q2NHG2</accession>
<proteinExistence type="inferred from homology"/>
<evidence type="ECO:0000250" key="1"/>
<evidence type="ECO:0000255" key="2">
    <source>
        <dbReference type="HAMAP-Rule" id="MF_00324"/>
    </source>
</evidence>
<evidence type="ECO:0000256" key="3">
    <source>
        <dbReference type="SAM" id="MobiDB-lite"/>
    </source>
</evidence>
<dbReference type="EC" id="2.7.7.7" evidence="2"/>
<dbReference type="EC" id="3.1.11.1" evidence="2"/>
<dbReference type="EMBL" id="CP000102">
    <property type="protein sequence ID" value="ABC56671.1"/>
    <property type="molecule type" value="Genomic_DNA"/>
</dbReference>
<dbReference type="RefSeq" id="WP_011405871.1">
    <property type="nucleotide sequence ID" value="NC_007681.1"/>
</dbReference>
<dbReference type="SMR" id="Q2NHG2"/>
<dbReference type="STRING" id="339860.Msp_0255"/>
<dbReference type="GeneID" id="41324828"/>
<dbReference type="KEGG" id="mst:Msp_0255"/>
<dbReference type="eggNOG" id="arCOG04447">
    <property type="taxonomic scope" value="Archaea"/>
</dbReference>
<dbReference type="HOGENOM" id="CLU_001154_0_0_2"/>
<dbReference type="OrthoDB" id="7529at2157"/>
<dbReference type="Proteomes" id="UP000001931">
    <property type="component" value="Chromosome"/>
</dbReference>
<dbReference type="GO" id="GO:0003677">
    <property type="term" value="F:DNA binding"/>
    <property type="evidence" value="ECO:0007669"/>
    <property type="project" value="UniProtKB-UniRule"/>
</dbReference>
<dbReference type="GO" id="GO:0003887">
    <property type="term" value="F:DNA-directed DNA polymerase activity"/>
    <property type="evidence" value="ECO:0007669"/>
    <property type="project" value="UniProtKB-UniRule"/>
</dbReference>
<dbReference type="GO" id="GO:0008310">
    <property type="term" value="F:single-stranded DNA 3'-5' DNA exonuclease activity"/>
    <property type="evidence" value="ECO:0007669"/>
    <property type="project" value="UniProtKB-EC"/>
</dbReference>
<dbReference type="GO" id="GO:0006308">
    <property type="term" value="P:DNA catabolic process"/>
    <property type="evidence" value="ECO:0007669"/>
    <property type="project" value="UniProtKB-UniRule"/>
</dbReference>
<dbReference type="GO" id="GO:0006261">
    <property type="term" value="P:DNA-templated DNA replication"/>
    <property type="evidence" value="ECO:0007669"/>
    <property type="project" value="UniProtKB-UniRule"/>
</dbReference>
<dbReference type="HAMAP" id="MF_00324">
    <property type="entry name" value="DNApol_II_L_arch"/>
    <property type="match status" value="1"/>
</dbReference>
<dbReference type="InterPro" id="IPR004475">
    <property type="entry name" value="PolC_DP2"/>
</dbReference>
<dbReference type="InterPro" id="IPR056172">
    <property type="entry name" value="PolC_DP2_cat_dom"/>
</dbReference>
<dbReference type="InterPro" id="IPR056171">
    <property type="entry name" value="PolC_DP2_central_dom"/>
</dbReference>
<dbReference type="InterPro" id="IPR016033">
    <property type="entry name" value="PolC_DP2_N"/>
</dbReference>
<dbReference type="NCBIfam" id="TIGR00354">
    <property type="entry name" value="polC"/>
    <property type="match status" value="1"/>
</dbReference>
<dbReference type="NCBIfam" id="NF003103">
    <property type="entry name" value="PRK04023.1"/>
    <property type="match status" value="1"/>
</dbReference>
<dbReference type="PANTHER" id="PTHR42210">
    <property type="entry name" value="DNA POLYMERASE II LARGE SUBUNIT"/>
    <property type="match status" value="1"/>
</dbReference>
<dbReference type="PANTHER" id="PTHR42210:SF1">
    <property type="entry name" value="DNA POLYMERASE II LARGE SUBUNIT"/>
    <property type="match status" value="1"/>
</dbReference>
<dbReference type="Pfam" id="PF24846">
    <property type="entry name" value="PolC_DP2_cat"/>
    <property type="match status" value="1"/>
</dbReference>
<dbReference type="Pfam" id="PF24844">
    <property type="entry name" value="PolC_DP2_central"/>
    <property type="match status" value="1"/>
</dbReference>
<dbReference type="Pfam" id="PF03833">
    <property type="entry name" value="PolC_DP2_N"/>
    <property type="match status" value="1"/>
</dbReference>
<dbReference type="PIRSF" id="PIRSF016275">
    <property type="entry name" value="PolC_DP2"/>
    <property type="match status" value="1"/>
</dbReference>
<comment type="function">
    <text evidence="1">Possesses two activities: a DNA synthesis (polymerase) and an exonucleolytic activity that degrades single-stranded DNA in the 3'- to 5'-direction. Has a template-primer preference which is characteristic of a replicative DNA polymerase (By similarity).</text>
</comment>
<comment type="catalytic activity">
    <reaction evidence="2">
        <text>DNA(n) + a 2'-deoxyribonucleoside 5'-triphosphate = DNA(n+1) + diphosphate</text>
        <dbReference type="Rhea" id="RHEA:22508"/>
        <dbReference type="Rhea" id="RHEA-COMP:17339"/>
        <dbReference type="Rhea" id="RHEA-COMP:17340"/>
        <dbReference type="ChEBI" id="CHEBI:33019"/>
        <dbReference type="ChEBI" id="CHEBI:61560"/>
        <dbReference type="ChEBI" id="CHEBI:173112"/>
        <dbReference type="EC" id="2.7.7.7"/>
    </reaction>
</comment>
<comment type="catalytic activity">
    <reaction evidence="2">
        <text>Exonucleolytic cleavage in the 3'- to 5'-direction to yield nucleoside 5'-phosphates.</text>
        <dbReference type="EC" id="3.1.11.1"/>
    </reaction>
</comment>
<comment type="subunit">
    <text evidence="2">Heterodimer of a large subunit and a small subunit.</text>
</comment>
<comment type="similarity">
    <text evidence="2">Belongs to the archaeal DNA polymerase II family.</text>
</comment>
<reference key="1">
    <citation type="journal article" date="2006" name="J. Bacteriol.">
        <title>The genome sequence of Methanosphaera stadtmanae reveals why this human intestinal archaeon is restricted to methanol and H2 for methane formation and ATP synthesis.</title>
        <authorList>
            <person name="Fricke W.F."/>
            <person name="Seedorf H."/>
            <person name="Henne A."/>
            <person name="Kruer M."/>
            <person name="Liesegang H."/>
            <person name="Hedderich R."/>
            <person name="Gottschalk G."/>
            <person name="Thauer R.K."/>
        </authorList>
    </citation>
    <scope>NUCLEOTIDE SEQUENCE [LARGE SCALE GENOMIC DNA]</scope>
    <source>
        <strain>ATCC 43021 / DSM 3091 / JCM 11832 / MCB-3</strain>
    </source>
</reference>
<organism>
    <name type="scientific">Methanosphaera stadtmanae (strain ATCC 43021 / DSM 3091 / JCM 11832 / MCB-3)</name>
    <dbReference type="NCBI Taxonomy" id="339860"/>
    <lineage>
        <taxon>Archaea</taxon>
        <taxon>Methanobacteriati</taxon>
        <taxon>Methanobacteriota</taxon>
        <taxon>Methanomada group</taxon>
        <taxon>Methanobacteria</taxon>
        <taxon>Methanobacteriales</taxon>
        <taxon>Methanobacteriaceae</taxon>
        <taxon>Methanosphaera</taxon>
    </lineage>
</organism>
<keyword id="KW-0235">DNA replication</keyword>
<keyword id="KW-0238">DNA-binding</keyword>
<keyword id="KW-0239">DNA-directed DNA polymerase</keyword>
<keyword id="KW-0269">Exonuclease</keyword>
<keyword id="KW-0378">Hydrolase</keyword>
<keyword id="KW-0511">Multifunctional enzyme</keyword>
<keyword id="KW-0540">Nuclease</keyword>
<keyword id="KW-0548">Nucleotidyltransferase</keyword>
<keyword id="KW-1185">Reference proteome</keyword>
<keyword id="KW-0808">Transferase</keyword>
<protein>
    <recommendedName>
        <fullName evidence="2">DNA polymerase II large subunit</fullName>
        <shortName evidence="2">Pol II</shortName>
        <ecNumber evidence="2">2.7.7.7</ecNumber>
    </recommendedName>
    <alternativeName>
        <fullName evidence="2">Exodeoxyribonuclease large subunit</fullName>
        <ecNumber evidence="2">3.1.11.1</ecNumber>
    </alternativeName>
</protein>
<sequence>MDYFGMLEEKTKELYAIAREARKQGKDLELEPEIPLAKDLAERVEGLVGPEGVAKRIKELEKSMSREEVAFQIAKEIATKDDVEGQPNDYEVQEANADSAIRTALAILTEGVVAAPLEGIAKVKIKDNSDGTKCFGVYFAGPIRSAGGTAAALAVLLGDYIRMSQGLDRYKPTDDEIERYVEEVELYESEVTNLQYSPTPDEVRLAIRGIPVEVTGEQTDPVEVQNRDLPRVETNNLRGGALLAVAEGVIQKSRKIVKYAKTLKIDGWDWLEYFTAPKSTKEEEKKKEESSENKPKKKAKYMEDIIGGRPVMSYPGAKGGFRLRYGRTRDSGLASMAIHPATMEIVEFLAIGTQMKIEKPGKGNCVVPCDSIEGPIVKLKNGDVIQVNDVSKAISIRRDVNEIIFLGDMLVAFGEYLRGNIPLDVSAWCEEWWAQEIEASEYFKETHDTFGIDFNENMELNALLKLDIDAKKAFDIAKKTNTPLHPKFTFYYNDVTKEELNDLHNYLYSLIDSPEDVFKSDMNRIPIDYHKRIIEVLGIPHHVNNKSLIMSNDNLYTLMSVLNKSLSPDEDMETIEAVNMISPVSIKSKAPTYIGGRVGRPEKTKERLMKPAPHSLFPIGNYAGNIRNIVEAAKKGTIKVTLAKCKCTNPDCKVSSFKALCPVCGSRTELESSAAKNIKLDKLLMDAFENVNVRRLDEVKGVKGLISEDKYPEPLEKGILRARNDVFTYRDGTIRHDSTDLPLTHFIPREVGVPYEKILEMGYTEDIYGKPITNDNQIIEIKIQDIVVSESCGDYLLKVSKFIDDLLIRYYHMEPFYNAENRVDLVGHLIAGLAPHTSAGVLGRIVGFTKASCCYAHPYFHSAKRRNCDSDEDAVMLLLDALLNFGKTYLPSTRGGSMDAPLVLSIRIDPEEIDDESHNIDCMKRIPLEIYHKTEEGGVKPSDVNDLVDNVESRLGTDNQYHGLMYSHPTSSIHAGPKICLYKTLQTMTDKVESQIALAELLRAVDQKGVVEGVLNSHFLPDMAGNIRAFSRQKVRCTKCGAKYRRIPLSGECTCGNNLILSISKGSVLKYLDISKDLSHRYPINPYVVERIEILETGINSLFESDKSKQSSLDAFF</sequence>
<name>DP2L_METST</name>
<gene>
    <name evidence="2" type="primary">polC</name>
    <name type="ordered locus">Msp_0255</name>
</gene>
<feature type="chain" id="PRO_0000294693" description="DNA polymerase II large subunit">
    <location>
        <begin position="1"/>
        <end position="1117"/>
    </location>
</feature>
<feature type="region of interest" description="Disordered" evidence="3">
    <location>
        <begin position="279"/>
        <end position="299"/>
    </location>
</feature>
<feature type="compositionally biased region" description="Basic and acidic residues" evidence="3">
    <location>
        <begin position="279"/>
        <end position="294"/>
    </location>
</feature>